<proteinExistence type="inferred from homology"/>
<name>ATPD_PYRYE</name>
<accession>Q1XDP4</accession>
<protein>
    <recommendedName>
        <fullName evidence="1">ATP synthase subunit delta, chloroplastic</fullName>
    </recommendedName>
    <alternativeName>
        <fullName evidence="1">ATP synthase F(1) sector subunit delta</fullName>
    </alternativeName>
    <alternativeName>
        <fullName evidence="1">F-type ATPase subunit delta</fullName>
    </alternativeName>
</protein>
<comment type="function">
    <text evidence="1">F(1)F(0) ATP synthase produces ATP from ADP in the presence of a proton or sodium gradient. F-type ATPases consist of two structural domains, F(1) containing the extramembraneous catalytic core and F(0) containing the membrane proton channel, linked together by a central stalk and a peripheral stalk. During catalysis, ATP synthesis in the catalytic domain of F(1) is coupled via a rotary mechanism of the central stalk subunits to proton translocation.</text>
</comment>
<comment type="function">
    <text evidence="1">This protein is part of the stalk that links CF(0) to CF(1). It either transmits conformational changes from CF(0) to CF(1) or is implicated in proton conduction.</text>
</comment>
<comment type="subunit">
    <text evidence="1">F-type ATPases have 2 components, F(1) - the catalytic core - and F(0) - the membrane proton channel. F(1) has five subunits: alpha(3), beta(3), gamma(1), delta(1), epsilon(1). CF(0) has four main subunits: a(1), b(1), b'(1) and c(10-14). The alpha and beta chains form an alternating ring which encloses part of the gamma chain. F(1) is attached to F(0) by a central stalk formed by the gamma and epsilon chains, while a peripheral stalk is formed by the delta, b and b' chains.</text>
</comment>
<comment type="subcellular location">
    <subcellularLocation>
        <location evidence="1">Plastid</location>
        <location evidence="1">Chloroplast thylakoid membrane</location>
        <topology evidence="1">Peripheral membrane protein</topology>
    </subcellularLocation>
</comment>
<comment type="similarity">
    <text evidence="1">Belongs to the ATPase delta chain family.</text>
</comment>
<dbReference type="EMBL" id="AP006715">
    <property type="protein sequence ID" value="BAE92367.1"/>
    <property type="molecule type" value="Genomic_DNA"/>
</dbReference>
<dbReference type="RefSeq" id="YP_536924.1">
    <property type="nucleotide sequence ID" value="NC_007932.1"/>
</dbReference>
<dbReference type="SMR" id="Q1XDP4"/>
<dbReference type="GeneID" id="3978835"/>
<dbReference type="GO" id="GO:0009535">
    <property type="term" value="C:chloroplast thylakoid membrane"/>
    <property type="evidence" value="ECO:0007669"/>
    <property type="project" value="UniProtKB-SubCell"/>
</dbReference>
<dbReference type="GO" id="GO:0045259">
    <property type="term" value="C:proton-transporting ATP synthase complex"/>
    <property type="evidence" value="ECO:0007669"/>
    <property type="project" value="UniProtKB-KW"/>
</dbReference>
<dbReference type="GO" id="GO:0046933">
    <property type="term" value="F:proton-transporting ATP synthase activity, rotational mechanism"/>
    <property type="evidence" value="ECO:0007669"/>
    <property type="project" value="UniProtKB-UniRule"/>
</dbReference>
<dbReference type="Gene3D" id="1.10.520.20">
    <property type="entry name" value="N-terminal domain of the delta subunit of the F1F0-ATP synthase"/>
    <property type="match status" value="1"/>
</dbReference>
<dbReference type="HAMAP" id="MF_01416">
    <property type="entry name" value="ATP_synth_delta_bact"/>
    <property type="match status" value="1"/>
</dbReference>
<dbReference type="InterPro" id="IPR026015">
    <property type="entry name" value="ATP_synth_OSCP/delta_N_sf"/>
</dbReference>
<dbReference type="InterPro" id="IPR020781">
    <property type="entry name" value="ATPase_OSCP/d_CS"/>
</dbReference>
<dbReference type="InterPro" id="IPR000711">
    <property type="entry name" value="ATPase_OSCP/dsu"/>
</dbReference>
<dbReference type="NCBIfam" id="TIGR01145">
    <property type="entry name" value="ATP_synt_delta"/>
    <property type="match status" value="1"/>
</dbReference>
<dbReference type="PANTHER" id="PTHR11910">
    <property type="entry name" value="ATP SYNTHASE DELTA CHAIN"/>
    <property type="match status" value="1"/>
</dbReference>
<dbReference type="Pfam" id="PF00213">
    <property type="entry name" value="OSCP"/>
    <property type="match status" value="1"/>
</dbReference>
<dbReference type="PRINTS" id="PR00125">
    <property type="entry name" value="ATPASEDELTA"/>
</dbReference>
<dbReference type="SUPFAM" id="SSF47928">
    <property type="entry name" value="N-terminal domain of the delta subunit of the F1F0-ATP synthase"/>
    <property type="match status" value="1"/>
</dbReference>
<dbReference type="PROSITE" id="PS00389">
    <property type="entry name" value="ATPASE_DELTA"/>
    <property type="match status" value="1"/>
</dbReference>
<feature type="chain" id="PRO_0000277289" description="ATP synthase subunit delta, chloroplastic">
    <location>
        <begin position="1"/>
        <end position="186"/>
    </location>
</feature>
<sequence>MSSNNVVIKIAQPYAVALLDLAKTKKVTEKVSQDIQSIQNILAQSDKLKIFLANPLKTVEAKKEVIIATVGDQINENTLSFLMILVDRKRIGMLDAIASKYLELAYQMESLTIANINTSIALSPDQETLLTEKIKVMTKAKEVKLIISVEPELIGGFTIQIGSKVIDTSIRGQLRQMASHLDVVVT</sequence>
<organism>
    <name type="scientific">Pyropia yezoensis</name>
    <name type="common">Susabi-nori</name>
    <name type="synonym">Porphyra yezoensis</name>
    <dbReference type="NCBI Taxonomy" id="2788"/>
    <lineage>
        <taxon>Eukaryota</taxon>
        <taxon>Rhodophyta</taxon>
        <taxon>Bangiophyceae</taxon>
        <taxon>Bangiales</taxon>
        <taxon>Bangiaceae</taxon>
        <taxon>Pyropia</taxon>
    </lineage>
</organism>
<evidence type="ECO:0000255" key="1">
    <source>
        <dbReference type="HAMAP-Rule" id="MF_01416"/>
    </source>
</evidence>
<reference key="1">
    <citation type="submission" date="2003-11" db="EMBL/GenBank/DDBJ databases">
        <title>Whole genome sequence of Porphyra yezoensis chloroplast.</title>
        <authorList>
            <person name="Kunimoto M."/>
            <person name="Morishima K."/>
            <person name="Yoshikawa M."/>
            <person name="Fukuda S."/>
            <person name="Kobayashi T."/>
            <person name="Kobayashi M."/>
            <person name="Okazaki T."/>
            <person name="Ohara I."/>
            <person name="Nakayama I."/>
        </authorList>
    </citation>
    <scope>NUCLEOTIDE SEQUENCE [LARGE SCALE GENOMIC DNA]</scope>
    <source>
        <strain>U-51</strain>
    </source>
</reference>
<gene>
    <name evidence="1" type="primary">atpD</name>
</gene>
<keyword id="KW-0066">ATP synthesis</keyword>
<keyword id="KW-0139">CF(1)</keyword>
<keyword id="KW-0150">Chloroplast</keyword>
<keyword id="KW-0375">Hydrogen ion transport</keyword>
<keyword id="KW-0406">Ion transport</keyword>
<keyword id="KW-0472">Membrane</keyword>
<keyword id="KW-0934">Plastid</keyword>
<keyword id="KW-0793">Thylakoid</keyword>
<keyword id="KW-0813">Transport</keyword>
<geneLocation type="chloroplast"/>